<comment type="function">
    <text evidence="1">This enzyme catalyzes the endohydrolysis of 1,4-beta-glucosidic linkages in cellulose, lichenin and cereal beta-D-glucans.</text>
</comment>
<comment type="catalytic activity">
    <reaction>
        <text>Endohydrolysis of (1-&gt;4)-beta-D-glucosidic linkages in cellulose, lichenin and cereal beta-D-glucans.</text>
        <dbReference type="EC" id="3.2.1.4"/>
    </reaction>
</comment>
<comment type="pathway">
    <text>Glycan metabolism; cellulose degradation.</text>
</comment>
<comment type="similarity">
    <text evidence="2">Belongs to the glycosyl hydrolase 5 (cellulase A) family.</text>
</comment>
<proteinExistence type="inferred from homology"/>
<keyword id="KW-0119">Carbohydrate metabolism</keyword>
<keyword id="KW-0136">Cellulose degradation</keyword>
<keyword id="KW-0326">Glycosidase</keyword>
<keyword id="KW-0378">Hydrolase</keyword>
<keyword id="KW-0624">Polysaccharide degradation</keyword>
<keyword id="KW-1185">Reference proteome</keyword>
<reference key="1">
    <citation type="submission" date="2007-02" db="EMBL/GenBank/DDBJ databases">
        <title>Complete sequence of Clostridium thermocellum ATCC 27405.</title>
        <authorList>
            <consortium name="US DOE Joint Genome Institute"/>
            <person name="Copeland A."/>
            <person name="Lucas S."/>
            <person name="Lapidus A."/>
            <person name="Barry K."/>
            <person name="Detter J.C."/>
            <person name="Glavina del Rio T."/>
            <person name="Hammon N."/>
            <person name="Israni S."/>
            <person name="Dalin E."/>
            <person name="Tice H."/>
            <person name="Pitluck S."/>
            <person name="Chertkov O."/>
            <person name="Brettin T."/>
            <person name="Bruce D."/>
            <person name="Han C."/>
            <person name="Tapia R."/>
            <person name="Gilna P."/>
            <person name="Schmutz J."/>
            <person name="Larimer F."/>
            <person name="Land M."/>
            <person name="Hauser L."/>
            <person name="Kyrpides N."/>
            <person name="Mikhailova N."/>
            <person name="Wu J.H.D."/>
            <person name="Newcomb M."/>
            <person name="Richardson P."/>
        </authorList>
    </citation>
    <scope>NUCLEOTIDE SEQUENCE [LARGE SCALE GENOMIC DNA]</scope>
    <source>
        <strain>ATCC 27405 / DSM 1237 / JCM 9322 / NBRC 103400 / NCIMB 10682 / NRRL B-4536 / VPI 7372</strain>
    </source>
</reference>
<sequence length="343" mass="40905">MVSFKAGINLGGWISQYQVFSKEHFDTFITEKDIETIAEAGFDHVRLPFDYPIIESDDNVGEYKEDGLSYIDRCLEWCKKYNLGLVLDMHHAPGYRFQDFKTSTLFEDPNQQKRFVDIWRFLAKRYINEREHIAFELLNEVVEPDSTRWNKLMLECVKAIREIDSTRWLYIGGNNYNSPDELKNLADIDDDYIVYNFHFYNPFFFTHQKAHWSESAMAYNRTVKYPGQYEGIEEFVKNNPKYSFMMELNNLKLNKELLRKDLKPAIEFREKKKCKLYCGEFGVIAIADLESRIKWHEDYISLLEEYDIGGAVWNYKKMDFEIYNEDRKPVSQELVNILARRKT</sequence>
<dbReference type="EC" id="3.2.1.4"/>
<dbReference type="EMBL" id="CP000568">
    <property type="protein sequence ID" value="ABN54006.1"/>
    <property type="molecule type" value="Genomic_DNA"/>
</dbReference>
<dbReference type="RefSeq" id="WP_003514472.1">
    <property type="nucleotide sequence ID" value="NC_009012.1"/>
</dbReference>
<dbReference type="SMR" id="A3DJ77"/>
<dbReference type="STRING" id="203119.Cthe_2807"/>
<dbReference type="CAZy" id="GH5">
    <property type="family name" value="Glycoside Hydrolase Family 5"/>
</dbReference>
<dbReference type="GeneID" id="35804403"/>
<dbReference type="KEGG" id="cth:Cthe_2807"/>
<dbReference type="eggNOG" id="COG2730">
    <property type="taxonomic scope" value="Bacteria"/>
</dbReference>
<dbReference type="HOGENOM" id="CLU_018668_1_0_9"/>
<dbReference type="OrthoDB" id="9800475at2"/>
<dbReference type="UniPathway" id="UPA00696"/>
<dbReference type="Proteomes" id="UP000002145">
    <property type="component" value="Chromosome"/>
</dbReference>
<dbReference type="GO" id="GO:0009986">
    <property type="term" value="C:cell surface"/>
    <property type="evidence" value="ECO:0007669"/>
    <property type="project" value="TreeGrafter"/>
</dbReference>
<dbReference type="GO" id="GO:0005576">
    <property type="term" value="C:extracellular region"/>
    <property type="evidence" value="ECO:0007669"/>
    <property type="project" value="TreeGrafter"/>
</dbReference>
<dbReference type="GO" id="GO:0008422">
    <property type="term" value="F:beta-glucosidase activity"/>
    <property type="evidence" value="ECO:0007669"/>
    <property type="project" value="TreeGrafter"/>
</dbReference>
<dbReference type="GO" id="GO:0008810">
    <property type="term" value="F:cellulase activity"/>
    <property type="evidence" value="ECO:0007669"/>
    <property type="project" value="UniProtKB-EC"/>
</dbReference>
<dbReference type="GO" id="GO:0030245">
    <property type="term" value="P:cellulose catabolic process"/>
    <property type="evidence" value="ECO:0007669"/>
    <property type="project" value="UniProtKB-UniPathway"/>
</dbReference>
<dbReference type="Gene3D" id="3.20.20.80">
    <property type="entry name" value="Glycosidases"/>
    <property type="match status" value="1"/>
</dbReference>
<dbReference type="InterPro" id="IPR001547">
    <property type="entry name" value="Glyco_hydro_5"/>
</dbReference>
<dbReference type="InterPro" id="IPR018087">
    <property type="entry name" value="Glyco_hydro_5_CS"/>
</dbReference>
<dbReference type="InterPro" id="IPR017853">
    <property type="entry name" value="Glycoside_hydrolase_SF"/>
</dbReference>
<dbReference type="InterPro" id="IPR050386">
    <property type="entry name" value="Glycosyl_hydrolase_5"/>
</dbReference>
<dbReference type="PANTHER" id="PTHR31297:SF41">
    <property type="entry name" value="ENDOGLUCANASE, PUTATIVE (AFU_ORTHOLOGUE AFUA_5G01830)-RELATED"/>
    <property type="match status" value="1"/>
</dbReference>
<dbReference type="PANTHER" id="PTHR31297">
    <property type="entry name" value="GLUCAN ENDO-1,6-BETA-GLUCOSIDASE B"/>
    <property type="match status" value="1"/>
</dbReference>
<dbReference type="Pfam" id="PF00150">
    <property type="entry name" value="Cellulase"/>
    <property type="match status" value="1"/>
</dbReference>
<dbReference type="SUPFAM" id="SSF51445">
    <property type="entry name" value="(Trans)glycosidases"/>
    <property type="match status" value="1"/>
</dbReference>
<dbReference type="PROSITE" id="PS00659">
    <property type="entry name" value="GLYCOSYL_HYDROL_F5"/>
    <property type="match status" value="1"/>
</dbReference>
<accession>A3DJ77</accession>
<accession>P07985</accession>
<evidence type="ECO:0000250" key="1"/>
<evidence type="ECO:0000305" key="2"/>
<name>GUNC_ACET2</name>
<feature type="chain" id="PRO_0000284720" description="Endoglucanase C">
    <location>
        <begin position="1"/>
        <end position="343"/>
    </location>
</feature>
<feature type="active site" description="Proton donor" evidence="1">
    <location>
        <position position="140"/>
    </location>
</feature>
<feature type="active site" description="Nucleophile" evidence="1">
    <location>
        <position position="280"/>
    </location>
</feature>
<organism>
    <name type="scientific">Acetivibrio thermocellus (strain ATCC 27405 / DSM 1237 / JCM 9322 / NBRC 103400 / NCIMB 10682 / NRRL B-4536 / VPI 7372)</name>
    <name type="common">Clostridium thermocellum</name>
    <dbReference type="NCBI Taxonomy" id="203119"/>
    <lineage>
        <taxon>Bacteria</taxon>
        <taxon>Bacillati</taxon>
        <taxon>Bacillota</taxon>
        <taxon>Clostridia</taxon>
        <taxon>Eubacteriales</taxon>
        <taxon>Oscillospiraceae</taxon>
        <taxon>Acetivibrio</taxon>
    </lineage>
</organism>
<protein>
    <recommendedName>
        <fullName>Endoglucanase C</fullName>
        <ecNumber>3.2.1.4</ecNumber>
    </recommendedName>
    <alternativeName>
        <fullName>Cellulase C</fullName>
    </alternativeName>
    <alternativeName>
        <fullName>Endo-1,4-beta-glucanase C</fullName>
        <shortName>EgC</shortName>
    </alternativeName>
</protein>
<gene>
    <name type="primary">celC</name>
    <name type="ordered locus">Cthe_2807</name>
</gene>